<reference key="1">
    <citation type="journal article" date="2006" name="Nat. Genet.">
        <title>The multidrug-resistant human pathogen Clostridium difficile has a highly mobile, mosaic genome.</title>
        <authorList>
            <person name="Sebaihia M."/>
            <person name="Wren B.W."/>
            <person name="Mullany P."/>
            <person name="Fairweather N.F."/>
            <person name="Minton N."/>
            <person name="Stabler R."/>
            <person name="Thomson N.R."/>
            <person name="Roberts A.P."/>
            <person name="Cerdeno-Tarraga A.M."/>
            <person name="Wang H."/>
            <person name="Holden M.T.G."/>
            <person name="Wright A."/>
            <person name="Churcher C."/>
            <person name="Quail M.A."/>
            <person name="Baker S."/>
            <person name="Bason N."/>
            <person name="Brooks K."/>
            <person name="Chillingworth T."/>
            <person name="Cronin A."/>
            <person name="Davis P."/>
            <person name="Dowd L."/>
            <person name="Fraser A."/>
            <person name="Feltwell T."/>
            <person name="Hance Z."/>
            <person name="Holroyd S."/>
            <person name="Jagels K."/>
            <person name="Moule S."/>
            <person name="Mungall K."/>
            <person name="Price C."/>
            <person name="Rabbinowitsch E."/>
            <person name="Sharp S."/>
            <person name="Simmonds M."/>
            <person name="Stevens K."/>
            <person name="Unwin L."/>
            <person name="Whithead S."/>
            <person name="Dupuy B."/>
            <person name="Dougan G."/>
            <person name="Barrell B."/>
            <person name="Parkhill J."/>
        </authorList>
    </citation>
    <scope>NUCLEOTIDE SEQUENCE [LARGE SCALE GENOMIC DNA]</scope>
    <source>
        <strain>630</strain>
    </source>
</reference>
<feature type="chain" id="PRO_1000003936" description="Small ribosomal subunit protein uS2">
    <location>
        <begin position="1"/>
        <end position="237"/>
    </location>
</feature>
<sequence length="237" mass="26843">MSVISMKQLLEAGVHFGHQTRRWNPKMAKYIFTERNGIYIIDLQKTVKKVEEAYKFTKEVAETGKPILFVGTKKQAQDAIKDEAERCGMYFVNERWLGGMLTNHKTIKTRINKLRELEKMEEEGVFNVLPKKEVIKLRAEKEKLEKYLGGIKDMPELPGAMFVVDPRKENIAIQEAHRLGIPVVGIVDTNCDPEQLDFAIPGNDDAIRAVKLITGAMATAVIEGRQGAEEEVAEDQE</sequence>
<gene>
    <name evidence="1" type="primary">rpsB</name>
    <name type="ordered locus">CD630_21400</name>
</gene>
<evidence type="ECO:0000255" key="1">
    <source>
        <dbReference type="HAMAP-Rule" id="MF_00291"/>
    </source>
</evidence>
<evidence type="ECO:0000305" key="2"/>
<proteinExistence type="inferred from homology"/>
<comment type="similarity">
    <text evidence="1">Belongs to the universal ribosomal protein uS2 family.</text>
</comment>
<name>RS2_CLOD6</name>
<accession>Q185S8</accession>
<keyword id="KW-1185">Reference proteome</keyword>
<keyword id="KW-0687">Ribonucleoprotein</keyword>
<keyword id="KW-0689">Ribosomal protein</keyword>
<organism>
    <name type="scientific">Clostridioides difficile (strain 630)</name>
    <name type="common">Peptoclostridium difficile</name>
    <dbReference type="NCBI Taxonomy" id="272563"/>
    <lineage>
        <taxon>Bacteria</taxon>
        <taxon>Bacillati</taxon>
        <taxon>Bacillota</taxon>
        <taxon>Clostridia</taxon>
        <taxon>Peptostreptococcales</taxon>
        <taxon>Peptostreptococcaceae</taxon>
        <taxon>Clostridioides</taxon>
    </lineage>
</organism>
<dbReference type="EMBL" id="AM180355">
    <property type="protein sequence ID" value="CAJ69025.1"/>
    <property type="molecule type" value="Genomic_DNA"/>
</dbReference>
<dbReference type="RefSeq" id="WP_003424537.1">
    <property type="nucleotide sequence ID" value="NZ_JAUPES010000047.1"/>
</dbReference>
<dbReference type="RefSeq" id="YP_001088654.1">
    <property type="nucleotide sequence ID" value="NC_009089.1"/>
</dbReference>
<dbReference type="SMR" id="Q185S8"/>
<dbReference type="STRING" id="272563.CD630_21400"/>
<dbReference type="EnsemblBacteria" id="CAJ69025">
    <property type="protein sequence ID" value="CAJ69025"/>
    <property type="gene ID" value="CD630_21400"/>
</dbReference>
<dbReference type="GeneID" id="66354535"/>
<dbReference type="KEGG" id="cdf:CD630_21400"/>
<dbReference type="KEGG" id="pdc:CDIF630_02371"/>
<dbReference type="PATRIC" id="fig|272563.120.peg.2260"/>
<dbReference type="eggNOG" id="COG0052">
    <property type="taxonomic scope" value="Bacteria"/>
</dbReference>
<dbReference type="OrthoDB" id="9808036at2"/>
<dbReference type="PhylomeDB" id="Q185S8"/>
<dbReference type="BioCyc" id="PDIF272563:G12WB-2297-MONOMER"/>
<dbReference type="Proteomes" id="UP000001978">
    <property type="component" value="Chromosome"/>
</dbReference>
<dbReference type="GO" id="GO:0022627">
    <property type="term" value="C:cytosolic small ribosomal subunit"/>
    <property type="evidence" value="ECO:0007669"/>
    <property type="project" value="TreeGrafter"/>
</dbReference>
<dbReference type="GO" id="GO:0003735">
    <property type="term" value="F:structural constituent of ribosome"/>
    <property type="evidence" value="ECO:0007669"/>
    <property type="project" value="InterPro"/>
</dbReference>
<dbReference type="GO" id="GO:0006412">
    <property type="term" value="P:translation"/>
    <property type="evidence" value="ECO:0007669"/>
    <property type="project" value="UniProtKB-UniRule"/>
</dbReference>
<dbReference type="CDD" id="cd01425">
    <property type="entry name" value="RPS2"/>
    <property type="match status" value="1"/>
</dbReference>
<dbReference type="FunFam" id="1.10.287.610:FF:000001">
    <property type="entry name" value="30S ribosomal protein S2"/>
    <property type="match status" value="1"/>
</dbReference>
<dbReference type="Gene3D" id="3.40.50.10490">
    <property type="entry name" value="Glucose-6-phosphate isomerase like protein, domain 1"/>
    <property type="match status" value="1"/>
</dbReference>
<dbReference type="Gene3D" id="1.10.287.610">
    <property type="entry name" value="Helix hairpin bin"/>
    <property type="match status" value="1"/>
</dbReference>
<dbReference type="HAMAP" id="MF_00291_B">
    <property type="entry name" value="Ribosomal_uS2_B"/>
    <property type="match status" value="1"/>
</dbReference>
<dbReference type="InterPro" id="IPR001865">
    <property type="entry name" value="Ribosomal_uS2"/>
</dbReference>
<dbReference type="InterPro" id="IPR005706">
    <property type="entry name" value="Ribosomal_uS2_bac/mit/plastid"/>
</dbReference>
<dbReference type="InterPro" id="IPR018130">
    <property type="entry name" value="Ribosomal_uS2_CS"/>
</dbReference>
<dbReference type="InterPro" id="IPR023591">
    <property type="entry name" value="Ribosomal_uS2_flav_dom_sf"/>
</dbReference>
<dbReference type="NCBIfam" id="TIGR01011">
    <property type="entry name" value="rpsB_bact"/>
    <property type="match status" value="1"/>
</dbReference>
<dbReference type="PANTHER" id="PTHR12534">
    <property type="entry name" value="30S RIBOSOMAL PROTEIN S2 PROKARYOTIC AND ORGANELLAR"/>
    <property type="match status" value="1"/>
</dbReference>
<dbReference type="PANTHER" id="PTHR12534:SF0">
    <property type="entry name" value="SMALL RIBOSOMAL SUBUNIT PROTEIN US2M"/>
    <property type="match status" value="1"/>
</dbReference>
<dbReference type="Pfam" id="PF00318">
    <property type="entry name" value="Ribosomal_S2"/>
    <property type="match status" value="1"/>
</dbReference>
<dbReference type="PRINTS" id="PR00395">
    <property type="entry name" value="RIBOSOMALS2"/>
</dbReference>
<dbReference type="SUPFAM" id="SSF52313">
    <property type="entry name" value="Ribosomal protein S2"/>
    <property type="match status" value="1"/>
</dbReference>
<dbReference type="PROSITE" id="PS00962">
    <property type="entry name" value="RIBOSOMAL_S2_1"/>
    <property type="match status" value="1"/>
</dbReference>
<dbReference type="PROSITE" id="PS00963">
    <property type="entry name" value="RIBOSOMAL_S2_2"/>
    <property type="match status" value="1"/>
</dbReference>
<protein>
    <recommendedName>
        <fullName evidence="1">Small ribosomal subunit protein uS2</fullName>
    </recommendedName>
    <alternativeName>
        <fullName evidence="2">30S ribosomal protein S2</fullName>
    </alternativeName>
</protein>